<evidence type="ECO:0000250" key="1"/>
<evidence type="ECO:0000255" key="2">
    <source>
        <dbReference type="PROSITE-ProRule" id="PRU00280"/>
    </source>
</evidence>
<organism>
    <name type="scientific">Staphylococcus aureus (strain bovine RF122 / ET3-1)</name>
    <dbReference type="NCBI Taxonomy" id="273036"/>
    <lineage>
        <taxon>Bacteria</taxon>
        <taxon>Bacillati</taxon>
        <taxon>Bacillota</taxon>
        <taxon>Bacilli</taxon>
        <taxon>Bacillales</taxon>
        <taxon>Staphylococcaceae</taxon>
        <taxon>Staphylococcus</taxon>
    </lineage>
</organism>
<gene>
    <name type="primary">copZ</name>
    <name type="ordered locus">SAB2431.1</name>
</gene>
<protein>
    <recommendedName>
        <fullName>Copper chaperone CopZ</fullName>
    </recommendedName>
</protein>
<accession>P0C885</accession>
<reference key="1">
    <citation type="journal article" date="2007" name="PLoS ONE">
        <title>Molecular correlates of host specialization in Staphylococcus aureus.</title>
        <authorList>
            <person name="Herron-Olson L."/>
            <person name="Fitzgerald J.R."/>
            <person name="Musser J.M."/>
            <person name="Kapur V."/>
        </authorList>
    </citation>
    <scope>NUCLEOTIDE SEQUENCE [LARGE SCALE GENOMIC DNA]</scope>
    <source>
        <strain>bovine RF122 / ET3-1</strain>
    </source>
</reference>
<feature type="chain" id="PRO_0000351270" description="Copper chaperone CopZ">
    <location>
        <begin position="1"/>
        <end position="68"/>
    </location>
</feature>
<feature type="domain" description="HMA" evidence="2">
    <location>
        <begin position="2"/>
        <end position="68"/>
    </location>
</feature>
<feature type="binding site" evidence="2">
    <location>
        <position position="13"/>
    </location>
    <ligand>
        <name>Cu cation</name>
        <dbReference type="ChEBI" id="CHEBI:23378"/>
    </ligand>
</feature>
<feature type="binding site" evidence="2">
    <location>
        <position position="16"/>
    </location>
    <ligand>
        <name>Cu cation</name>
        <dbReference type="ChEBI" id="CHEBI:23378"/>
    </ligand>
</feature>
<dbReference type="EMBL" id="AJ938182">
    <property type="status" value="NOT_ANNOTATED_CDS"/>
    <property type="molecule type" value="Genomic_DNA"/>
</dbReference>
<dbReference type="RefSeq" id="WP_000076662.1">
    <property type="nucleotide sequence ID" value="NC_007622.1"/>
</dbReference>
<dbReference type="SMR" id="P0C885"/>
<dbReference type="GeneID" id="98346874"/>
<dbReference type="GO" id="GO:0005737">
    <property type="term" value="C:cytoplasm"/>
    <property type="evidence" value="ECO:0007669"/>
    <property type="project" value="UniProtKB-SubCell"/>
</dbReference>
<dbReference type="GO" id="GO:0005507">
    <property type="term" value="F:copper ion binding"/>
    <property type="evidence" value="ECO:0007669"/>
    <property type="project" value="InterPro"/>
</dbReference>
<dbReference type="CDD" id="cd00371">
    <property type="entry name" value="HMA"/>
    <property type="match status" value="1"/>
</dbReference>
<dbReference type="FunFam" id="3.30.70.100:FF:000005">
    <property type="entry name" value="Copper-exporting P-type ATPase A"/>
    <property type="match status" value="1"/>
</dbReference>
<dbReference type="Gene3D" id="3.30.70.100">
    <property type="match status" value="1"/>
</dbReference>
<dbReference type="InterPro" id="IPR049740">
    <property type="entry name" value="CopZ"/>
</dbReference>
<dbReference type="InterPro" id="IPR017969">
    <property type="entry name" value="Heavy-metal-associated_CS"/>
</dbReference>
<dbReference type="InterPro" id="IPR006122">
    <property type="entry name" value="HMA_Cu_ion-bd"/>
</dbReference>
<dbReference type="InterPro" id="IPR006121">
    <property type="entry name" value="HMA_dom"/>
</dbReference>
<dbReference type="InterPro" id="IPR036163">
    <property type="entry name" value="HMA_dom_sf"/>
</dbReference>
<dbReference type="InterPro" id="IPR001802">
    <property type="entry name" value="MerP/CopZ"/>
</dbReference>
<dbReference type="NCBIfam" id="NF033795">
    <property type="entry name" value="chaper_CopZ_Bs"/>
    <property type="match status" value="1"/>
</dbReference>
<dbReference type="NCBIfam" id="TIGR00003">
    <property type="entry name" value="copper ion binding protein"/>
    <property type="match status" value="1"/>
</dbReference>
<dbReference type="PANTHER" id="PTHR46594">
    <property type="entry name" value="P-TYPE CATION-TRANSPORTING ATPASE"/>
    <property type="match status" value="1"/>
</dbReference>
<dbReference type="PANTHER" id="PTHR46594:SF4">
    <property type="entry name" value="P-TYPE CATION-TRANSPORTING ATPASE"/>
    <property type="match status" value="1"/>
</dbReference>
<dbReference type="Pfam" id="PF00403">
    <property type="entry name" value="HMA"/>
    <property type="match status" value="1"/>
</dbReference>
<dbReference type="PRINTS" id="PR00946">
    <property type="entry name" value="HGSCAVENGER"/>
</dbReference>
<dbReference type="SUPFAM" id="SSF55008">
    <property type="entry name" value="HMA, heavy metal-associated domain"/>
    <property type="match status" value="1"/>
</dbReference>
<dbReference type="PROSITE" id="PS01047">
    <property type="entry name" value="HMA_1"/>
    <property type="match status" value="1"/>
</dbReference>
<dbReference type="PROSITE" id="PS50846">
    <property type="entry name" value="HMA_2"/>
    <property type="match status" value="1"/>
</dbReference>
<keyword id="KW-0143">Chaperone</keyword>
<keyword id="KW-0186">Copper</keyword>
<keyword id="KW-0963">Cytoplasm</keyword>
<keyword id="KW-0479">Metal-binding</keyword>
<sequence>MSQEILNVEGMSCGHCKSAVESALNNIDGVTSAEVNLENGQVSVQYDDSKVAVSQMKDAIEDQGYDVV</sequence>
<comment type="function">
    <text evidence="1">Chaperone that serves for the intracellular sequestration and transport of Cu(+). Delivers Cu(+) to the copper-exporting P-type ATPase A (CopA) (By similarity).</text>
</comment>
<comment type="subcellular location">
    <subcellularLocation>
        <location evidence="1">Cytoplasm</location>
    </subcellularLocation>
</comment>
<name>COPZ_STAAB</name>
<proteinExistence type="inferred from homology"/>